<reference key="1">
    <citation type="journal article" date="1997" name="Nature">
        <title>The complete genome sequence of the Gram-positive bacterium Bacillus subtilis.</title>
        <authorList>
            <person name="Kunst F."/>
            <person name="Ogasawara N."/>
            <person name="Moszer I."/>
            <person name="Albertini A.M."/>
            <person name="Alloni G."/>
            <person name="Azevedo V."/>
            <person name="Bertero M.G."/>
            <person name="Bessieres P."/>
            <person name="Bolotin A."/>
            <person name="Borchert S."/>
            <person name="Borriss R."/>
            <person name="Boursier L."/>
            <person name="Brans A."/>
            <person name="Braun M."/>
            <person name="Brignell S.C."/>
            <person name="Bron S."/>
            <person name="Brouillet S."/>
            <person name="Bruschi C.V."/>
            <person name="Caldwell B."/>
            <person name="Capuano V."/>
            <person name="Carter N.M."/>
            <person name="Choi S.-K."/>
            <person name="Codani J.-J."/>
            <person name="Connerton I.F."/>
            <person name="Cummings N.J."/>
            <person name="Daniel R.A."/>
            <person name="Denizot F."/>
            <person name="Devine K.M."/>
            <person name="Duesterhoeft A."/>
            <person name="Ehrlich S.D."/>
            <person name="Emmerson P.T."/>
            <person name="Entian K.-D."/>
            <person name="Errington J."/>
            <person name="Fabret C."/>
            <person name="Ferrari E."/>
            <person name="Foulger D."/>
            <person name="Fritz C."/>
            <person name="Fujita M."/>
            <person name="Fujita Y."/>
            <person name="Fuma S."/>
            <person name="Galizzi A."/>
            <person name="Galleron N."/>
            <person name="Ghim S.-Y."/>
            <person name="Glaser P."/>
            <person name="Goffeau A."/>
            <person name="Golightly E.J."/>
            <person name="Grandi G."/>
            <person name="Guiseppi G."/>
            <person name="Guy B.J."/>
            <person name="Haga K."/>
            <person name="Haiech J."/>
            <person name="Harwood C.R."/>
            <person name="Henaut A."/>
            <person name="Hilbert H."/>
            <person name="Holsappel S."/>
            <person name="Hosono S."/>
            <person name="Hullo M.-F."/>
            <person name="Itaya M."/>
            <person name="Jones L.-M."/>
            <person name="Joris B."/>
            <person name="Karamata D."/>
            <person name="Kasahara Y."/>
            <person name="Klaerr-Blanchard M."/>
            <person name="Klein C."/>
            <person name="Kobayashi Y."/>
            <person name="Koetter P."/>
            <person name="Koningstein G."/>
            <person name="Krogh S."/>
            <person name="Kumano M."/>
            <person name="Kurita K."/>
            <person name="Lapidus A."/>
            <person name="Lardinois S."/>
            <person name="Lauber J."/>
            <person name="Lazarevic V."/>
            <person name="Lee S.-M."/>
            <person name="Levine A."/>
            <person name="Liu H."/>
            <person name="Masuda S."/>
            <person name="Mauel C."/>
            <person name="Medigue C."/>
            <person name="Medina N."/>
            <person name="Mellado R.P."/>
            <person name="Mizuno M."/>
            <person name="Moestl D."/>
            <person name="Nakai S."/>
            <person name="Noback M."/>
            <person name="Noone D."/>
            <person name="O'Reilly M."/>
            <person name="Ogawa K."/>
            <person name="Ogiwara A."/>
            <person name="Oudega B."/>
            <person name="Park S.-H."/>
            <person name="Parro V."/>
            <person name="Pohl T.M."/>
            <person name="Portetelle D."/>
            <person name="Porwollik S."/>
            <person name="Prescott A.M."/>
            <person name="Presecan E."/>
            <person name="Pujic P."/>
            <person name="Purnelle B."/>
            <person name="Rapoport G."/>
            <person name="Rey M."/>
            <person name="Reynolds S."/>
            <person name="Rieger M."/>
            <person name="Rivolta C."/>
            <person name="Rocha E."/>
            <person name="Roche B."/>
            <person name="Rose M."/>
            <person name="Sadaie Y."/>
            <person name="Sato T."/>
            <person name="Scanlan E."/>
            <person name="Schleich S."/>
            <person name="Schroeter R."/>
            <person name="Scoffone F."/>
            <person name="Sekiguchi J."/>
            <person name="Sekowska A."/>
            <person name="Seror S.J."/>
            <person name="Serror P."/>
            <person name="Shin B.-S."/>
            <person name="Soldo B."/>
            <person name="Sorokin A."/>
            <person name="Tacconi E."/>
            <person name="Takagi T."/>
            <person name="Takahashi H."/>
            <person name="Takemaru K."/>
            <person name="Takeuchi M."/>
            <person name="Tamakoshi A."/>
            <person name="Tanaka T."/>
            <person name="Terpstra P."/>
            <person name="Tognoni A."/>
            <person name="Tosato V."/>
            <person name="Uchiyama S."/>
            <person name="Vandenbol M."/>
            <person name="Vannier F."/>
            <person name="Vassarotti A."/>
            <person name="Viari A."/>
            <person name="Wambutt R."/>
            <person name="Wedler E."/>
            <person name="Wedler H."/>
            <person name="Weitzenegger T."/>
            <person name="Winters P."/>
            <person name="Wipat A."/>
            <person name="Yamamoto H."/>
            <person name="Yamane K."/>
            <person name="Yasumoto K."/>
            <person name="Yata K."/>
            <person name="Yoshida K."/>
            <person name="Yoshikawa H.-F."/>
            <person name="Zumstein E."/>
            <person name="Yoshikawa H."/>
            <person name="Danchin A."/>
        </authorList>
    </citation>
    <scope>NUCLEOTIDE SEQUENCE [LARGE SCALE GENOMIC DNA]</scope>
    <source>
        <strain>168</strain>
    </source>
</reference>
<protein>
    <recommendedName>
        <fullName evidence="1">Protease HtpX homolog</fullName>
        <ecNumber evidence="1">3.4.24.-</ecNumber>
    </recommendedName>
</protein>
<keyword id="KW-1003">Cell membrane</keyword>
<keyword id="KW-0378">Hydrolase</keyword>
<keyword id="KW-0472">Membrane</keyword>
<keyword id="KW-0479">Metal-binding</keyword>
<keyword id="KW-0482">Metalloprotease</keyword>
<keyword id="KW-0645">Protease</keyword>
<keyword id="KW-1185">Reference proteome</keyword>
<keyword id="KW-0812">Transmembrane</keyword>
<keyword id="KW-1133">Transmembrane helix</keyword>
<keyword id="KW-0862">Zinc</keyword>
<name>HTPX_BACSU</name>
<accession>O31657</accession>
<evidence type="ECO:0000255" key="1">
    <source>
        <dbReference type="HAMAP-Rule" id="MF_00188"/>
    </source>
</evidence>
<organism>
    <name type="scientific">Bacillus subtilis (strain 168)</name>
    <dbReference type="NCBI Taxonomy" id="224308"/>
    <lineage>
        <taxon>Bacteria</taxon>
        <taxon>Bacillati</taxon>
        <taxon>Bacillota</taxon>
        <taxon>Bacilli</taxon>
        <taxon>Bacillales</taxon>
        <taxon>Bacillaceae</taxon>
        <taxon>Bacillus</taxon>
    </lineage>
</organism>
<comment type="cofactor">
    <cofactor evidence="1">
        <name>Zn(2+)</name>
        <dbReference type="ChEBI" id="CHEBI:29105"/>
    </cofactor>
    <text evidence="1">Binds 1 zinc ion per subunit.</text>
</comment>
<comment type="subcellular location">
    <subcellularLocation>
        <location evidence="1">Cell membrane</location>
        <topology evidence="1">Multi-pass membrane protein</topology>
    </subcellularLocation>
</comment>
<comment type="similarity">
    <text evidence="1">Belongs to the peptidase M48B family.</text>
</comment>
<gene>
    <name evidence="1" type="primary">htpX</name>
    <name type="synonym">ykrL</name>
    <name type="ordered locus">BSU13490</name>
</gene>
<dbReference type="EC" id="3.4.24.-" evidence="1"/>
<dbReference type="EMBL" id="AL009126">
    <property type="protein sequence ID" value="CAB13222.1"/>
    <property type="molecule type" value="Genomic_DNA"/>
</dbReference>
<dbReference type="PIR" id="G69862">
    <property type="entry name" value="G69862"/>
</dbReference>
<dbReference type="RefSeq" id="NP_389232.1">
    <property type="nucleotide sequence ID" value="NC_000964.3"/>
</dbReference>
<dbReference type="RefSeq" id="WP_003245353.1">
    <property type="nucleotide sequence ID" value="NZ_OZ025638.1"/>
</dbReference>
<dbReference type="SMR" id="O31657"/>
<dbReference type="FunCoup" id="O31657">
    <property type="interactions" value="225"/>
</dbReference>
<dbReference type="STRING" id="224308.BSU13490"/>
<dbReference type="jPOST" id="O31657"/>
<dbReference type="PaxDb" id="224308-BSU13490"/>
<dbReference type="EnsemblBacteria" id="CAB13222">
    <property type="protein sequence ID" value="CAB13222"/>
    <property type="gene ID" value="BSU_13490"/>
</dbReference>
<dbReference type="GeneID" id="939359"/>
<dbReference type="KEGG" id="bsu:BSU13490"/>
<dbReference type="PATRIC" id="fig|224308.179.peg.1464"/>
<dbReference type="eggNOG" id="COG0501">
    <property type="taxonomic scope" value="Bacteria"/>
</dbReference>
<dbReference type="InParanoid" id="O31657"/>
<dbReference type="OrthoDB" id="15218at2"/>
<dbReference type="PhylomeDB" id="O31657"/>
<dbReference type="BioCyc" id="BSUB:BSU13490-MONOMER"/>
<dbReference type="Proteomes" id="UP000001570">
    <property type="component" value="Chromosome"/>
</dbReference>
<dbReference type="GO" id="GO:0005886">
    <property type="term" value="C:plasma membrane"/>
    <property type="evidence" value="ECO:0007669"/>
    <property type="project" value="UniProtKB-SubCell"/>
</dbReference>
<dbReference type="GO" id="GO:0004222">
    <property type="term" value="F:metalloendopeptidase activity"/>
    <property type="evidence" value="ECO:0007669"/>
    <property type="project" value="UniProtKB-UniRule"/>
</dbReference>
<dbReference type="GO" id="GO:0008270">
    <property type="term" value="F:zinc ion binding"/>
    <property type="evidence" value="ECO:0007669"/>
    <property type="project" value="UniProtKB-UniRule"/>
</dbReference>
<dbReference type="GO" id="GO:0006508">
    <property type="term" value="P:proteolysis"/>
    <property type="evidence" value="ECO:0007669"/>
    <property type="project" value="UniProtKB-KW"/>
</dbReference>
<dbReference type="CDD" id="cd07335">
    <property type="entry name" value="M48B_HtpX_like"/>
    <property type="match status" value="1"/>
</dbReference>
<dbReference type="Gene3D" id="3.30.2010.10">
    <property type="entry name" value="Metalloproteases ('zincins'), catalytic domain"/>
    <property type="match status" value="1"/>
</dbReference>
<dbReference type="HAMAP" id="MF_00188">
    <property type="entry name" value="Pept_M48_protease_HtpX"/>
    <property type="match status" value="1"/>
</dbReference>
<dbReference type="InterPro" id="IPR050083">
    <property type="entry name" value="HtpX_protease"/>
</dbReference>
<dbReference type="InterPro" id="IPR022919">
    <property type="entry name" value="Pept_M48_protease_HtpX"/>
</dbReference>
<dbReference type="InterPro" id="IPR001915">
    <property type="entry name" value="Peptidase_M48"/>
</dbReference>
<dbReference type="NCBIfam" id="NF003965">
    <property type="entry name" value="PRK05457.1"/>
    <property type="match status" value="1"/>
</dbReference>
<dbReference type="PANTHER" id="PTHR43221">
    <property type="entry name" value="PROTEASE HTPX"/>
    <property type="match status" value="1"/>
</dbReference>
<dbReference type="PANTHER" id="PTHR43221:SF1">
    <property type="entry name" value="PROTEASE HTPX"/>
    <property type="match status" value="1"/>
</dbReference>
<dbReference type="Pfam" id="PF01435">
    <property type="entry name" value="Peptidase_M48"/>
    <property type="match status" value="1"/>
</dbReference>
<feature type="chain" id="PRO_0000138852" description="Protease HtpX homolog">
    <location>
        <begin position="1"/>
        <end position="298"/>
    </location>
</feature>
<feature type="transmembrane region" description="Helical" evidence="1">
    <location>
        <begin position="5"/>
        <end position="25"/>
    </location>
</feature>
<feature type="transmembrane region" description="Helical" evidence="1">
    <location>
        <begin position="45"/>
        <end position="65"/>
    </location>
</feature>
<feature type="transmembrane region" description="Helical" evidence="1">
    <location>
        <begin position="170"/>
        <end position="190"/>
    </location>
</feature>
<feature type="transmembrane region" description="Helical" evidence="1">
    <location>
        <begin position="204"/>
        <end position="224"/>
    </location>
</feature>
<feature type="active site" evidence="1">
    <location>
        <position position="156"/>
    </location>
</feature>
<feature type="binding site" evidence="1">
    <location>
        <position position="155"/>
    </location>
    <ligand>
        <name>Zn(2+)</name>
        <dbReference type="ChEBI" id="CHEBI:29105"/>
        <note>catalytic</note>
    </ligand>
</feature>
<feature type="binding site" evidence="1">
    <location>
        <position position="159"/>
    </location>
    <ligand>
        <name>Zn(2+)</name>
        <dbReference type="ChEBI" id="CHEBI:29105"/>
        <note>catalytic</note>
    </ligand>
</feature>
<feature type="binding site" evidence="1">
    <location>
        <position position="230"/>
    </location>
    <ligand>
        <name>Zn(2+)</name>
        <dbReference type="ChEBI" id="CHEBI:29105"/>
        <note>catalytic</note>
    </ligand>
</feature>
<proteinExistence type="inferred from homology"/>
<sequence>MAKRIFLFILTNILVLTTIGIVLSVLSSVTGVGTYFTADGGIDPMALLVFSLVVGFVGSFTSLAISRWMAKTMMGVRVLNPKKHSLSYEEQQLVDRVHRLSRSAGLTKMPEVGIYRSPEVNAFATGPSKRRSLVAVSSGLLEQMDDAAVEGVLAHEVAHITNGDMVTMTLLQGIVNTFVVFLSRIAAWIASRFVKEDLAPIVHFIAMIIFQIVFSILGSLVVFAYSRHREFHADRGGADLAGKDKMIHALRTLKSYSSRILEDDQTAVQTLKINGKKRSSLFSTHPDLDERIRRLEAK</sequence>